<proteinExistence type="evidence at transcript level"/>
<accession>P30969</accession>
<name>GNRHR_RAT</name>
<keyword id="KW-1003">Cell membrane</keyword>
<keyword id="KW-1015">Disulfide bond</keyword>
<keyword id="KW-0297">G-protein coupled receptor</keyword>
<keyword id="KW-0325">Glycoprotein</keyword>
<keyword id="KW-0472">Membrane</keyword>
<keyword id="KW-0675">Receptor</keyword>
<keyword id="KW-1185">Reference proteome</keyword>
<keyword id="KW-0807">Transducer</keyword>
<keyword id="KW-0812">Transmembrane</keyword>
<keyword id="KW-1133">Transmembrane helix</keyword>
<comment type="function">
    <text>Receptor for gonadotropin releasing hormone (GnRH) that mediates the action of GnRH to stimulate the secretion of the gonadotropic hormones luteinizing hormone (LH) and follicle-stimulating hormone (FSH). This receptor mediates its action by association with G-proteins that activate a phosphatidylinositol-calcium second messenger system.</text>
</comment>
<comment type="subcellular location">
    <subcellularLocation>
        <location>Cell membrane</location>
        <topology>Multi-pass membrane protein</topology>
    </subcellularLocation>
</comment>
<comment type="induction">
    <text evidence="3">Expression oscillates in a diurnal and melatonin-dependent fashion in the preoptic area (POA) region in the hypothalamus, with maximal expression attained during the dark phase of the light/dark cycle.</text>
</comment>
<comment type="similarity">
    <text evidence="2">Belongs to the G-protein coupled receptor 1 family.</text>
</comment>
<comment type="sequence caution" evidence="4">
    <conflict type="erroneous initiation">
        <sequence resource="EMBL-CDS" id="AAA41265"/>
    </conflict>
    <text>Extended N-terminus.</text>
</comment>
<sequence length="327" mass="37748">MANNASLEQDQNHCSAINNSIPLTQGKLPTLTLSGKIRVTVTFFLFLLSTAFNASFLVKLQRWTQKRKKGKKLSRMKVLLKHLTLANLLETLIVMPLDGMWNITVQWYAGEFLCKVLSYLKLFSMYAPAFMMVVISLDRSLAVTQPLAVQSKSKLERSMTSLAWILSIVFAGPQLYIFRMIYLADGSGPAVFSQCVTHCSFPQWWHEAFYNFFTFSCLFIIPLLIMLICNAKIIFALTRVLHQDPRKLQLNQSKNNIPRARLRTLKMTVAFGTSFVICWTPYYVLGIWYWFDPEMLNRVSEPVNHFFFLFAFLNPCFDPLIYGYFSL</sequence>
<gene>
    <name type="primary">Gnrhr</name>
</gene>
<feature type="chain" id="PRO_0000069491" description="Gonadotropin-releasing hormone receptor">
    <location>
        <begin position="1"/>
        <end position="327"/>
    </location>
</feature>
<feature type="topological domain" description="Extracellular" evidence="1">
    <location>
        <begin position="1"/>
        <end position="38"/>
    </location>
</feature>
<feature type="transmembrane region" description="Helical; Name=1" evidence="1">
    <location>
        <begin position="39"/>
        <end position="58"/>
    </location>
</feature>
<feature type="topological domain" description="Cytoplasmic" evidence="1">
    <location>
        <begin position="59"/>
        <end position="77"/>
    </location>
</feature>
<feature type="transmembrane region" description="Helical; Name=2" evidence="1">
    <location>
        <begin position="78"/>
        <end position="97"/>
    </location>
</feature>
<feature type="topological domain" description="Extracellular" evidence="1">
    <location>
        <begin position="98"/>
        <end position="115"/>
    </location>
</feature>
<feature type="transmembrane region" description="Helical; Name=3" evidence="1">
    <location>
        <begin position="116"/>
        <end position="137"/>
    </location>
</feature>
<feature type="topological domain" description="Cytoplasmic" evidence="1">
    <location>
        <begin position="138"/>
        <end position="164"/>
    </location>
</feature>
<feature type="transmembrane region" description="Helical; Name=4" evidence="1">
    <location>
        <begin position="165"/>
        <end position="184"/>
    </location>
</feature>
<feature type="topological domain" description="Extracellular" evidence="1">
    <location>
        <begin position="185"/>
        <end position="211"/>
    </location>
</feature>
<feature type="transmembrane region" description="Helical; Name=5" evidence="1">
    <location>
        <begin position="212"/>
        <end position="231"/>
    </location>
</feature>
<feature type="topological domain" description="Cytoplasmic" evidence="1">
    <location>
        <begin position="232"/>
        <end position="280"/>
    </location>
</feature>
<feature type="transmembrane region" description="Helical; Name=6" evidence="1">
    <location>
        <begin position="281"/>
        <end position="299"/>
    </location>
</feature>
<feature type="topological domain" description="Extracellular" evidence="1">
    <location>
        <begin position="300"/>
        <end position="305"/>
    </location>
</feature>
<feature type="transmembrane region" description="Helical; Name=7" evidence="1">
    <location>
        <begin position="306"/>
        <end position="325"/>
    </location>
</feature>
<feature type="topological domain" description="Cytoplasmic" evidence="1">
    <location>
        <begin position="326"/>
        <end position="327"/>
    </location>
</feature>
<feature type="glycosylation site" description="N-linked (GlcNAc...) asparagine" evidence="1">
    <location>
        <position position="4"/>
    </location>
</feature>
<feature type="glycosylation site" description="N-linked (GlcNAc...) asparagine" evidence="1">
    <location>
        <position position="18"/>
    </location>
</feature>
<feature type="glycosylation site" description="N-linked (GlcNAc...) asparagine" evidence="1">
    <location>
        <position position="102"/>
    </location>
</feature>
<feature type="disulfide bond" evidence="2">
    <location>
        <begin position="114"/>
        <end position="195"/>
    </location>
</feature>
<feature type="sequence conflict" description="In Ref. 1; CAA48776/AAB26420." evidence="4" ref="1">
    <original>A</original>
    <variation>V</variation>
    <location>
        <position position="184"/>
    </location>
</feature>
<feature type="sequence conflict" description="In Ref. 3; AAA41265, 5; CAA54083, 6; AAC60671 and 7; AAB58038." evidence="4" ref="3 5 6 7">
    <original>G</original>
    <variation>A</variation>
    <location>
        <position position="272"/>
    </location>
</feature>
<feature type="sequence conflict" description="In Ref. 1; CAA48776/AAB26420." evidence="4" ref="1">
    <original>A</original>
    <variation>G</variation>
    <location>
        <position position="311"/>
    </location>
</feature>
<protein>
    <recommendedName>
        <fullName>Gonadotropin-releasing hormone receptor</fullName>
        <shortName>GnRH receptor</shortName>
        <shortName>GnRH-R</shortName>
    </recommendedName>
</protein>
<dbReference type="EMBL" id="S59525">
    <property type="protein sequence ID" value="AAB26420.1"/>
    <property type="molecule type" value="mRNA"/>
</dbReference>
<dbReference type="EMBL" id="X68980">
    <property type="protein sequence ID" value="CAA48776.1"/>
    <property type="molecule type" value="mRNA"/>
</dbReference>
<dbReference type="EMBL" id="U00935">
    <property type="protein sequence ID" value="AAC27349.1"/>
    <property type="molecule type" value="mRNA"/>
</dbReference>
<dbReference type="EMBL" id="L25053">
    <property type="protein sequence ID" value="AAA41265.1"/>
    <property type="status" value="ALT_INIT"/>
    <property type="molecule type" value="mRNA"/>
</dbReference>
<dbReference type="EMBL" id="L07646">
    <property type="protein sequence ID" value="AAA41274.1"/>
    <property type="molecule type" value="mRNA"/>
</dbReference>
<dbReference type="EMBL" id="X76635">
    <property type="protein sequence ID" value="CAA54083.1"/>
    <property type="molecule type" value="mRNA"/>
</dbReference>
<dbReference type="EMBL" id="S68578">
    <property type="protein sequence ID" value="AAC60671.1"/>
    <property type="molecule type" value="mRNA"/>
</dbReference>
<dbReference type="EMBL" id="U92471">
    <property type="protein sequence ID" value="AAB58038.1"/>
    <property type="molecule type" value="Genomic_DNA"/>
</dbReference>
<dbReference type="EMBL" id="U92469">
    <property type="protein sequence ID" value="AAB58038.1"/>
    <property type="status" value="JOINED"/>
    <property type="molecule type" value="Genomic_DNA"/>
</dbReference>
<dbReference type="EMBL" id="U92470">
    <property type="protein sequence ID" value="AAB58038.1"/>
    <property type="status" value="JOINED"/>
    <property type="molecule type" value="Genomic_DNA"/>
</dbReference>
<dbReference type="PIR" id="I60169">
    <property type="entry name" value="I60169"/>
</dbReference>
<dbReference type="RefSeq" id="NP_112300.2">
    <property type="nucleotide sequence ID" value="NM_031038.3"/>
</dbReference>
<dbReference type="SMR" id="P30969"/>
<dbReference type="BioGRID" id="249567">
    <property type="interactions" value="3"/>
</dbReference>
<dbReference type="CORUM" id="P30969"/>
<dbReference type="FunCoup" id="P30969">
    <property type="interactions" value="207"/>
</dbReference>
<dbReference type="STRING" id="10116.ENSRNOP00000002755"/>
<dbReference type="BindingDB" id="P30969"/>
<dbReference type="ChEMBL" id="CHEMBL3066"/>
<dbReference type="DrugCentral" id="P30969"/>
<dbReference type="GuidetoPHARMACOLOGY" id="256"/>
<dbReference type="GlyCosmos" id="P30969">
    <property type="glycosylation" value="3 sites, No reported glycans"/>
</dbReference>
<dbReference type="GlyGen" id="P30969">
    <property type="glycosylation" value="4 sites"/>
</dbReference>
<dbReference type="iPTMnet" id="P30969"/>
<dbReference type="PhosphoSitePlus" id="P30969"/>
<dbReference type="PaxDb" id="10116-ENSRNOP00000002755"/>
<dbReference type="GeneID" id="81668"/>
<dbReference type="KEGG" id="rno:81668"/>
<dbReference type="UCSC" id="RGD:70513">
    <property type="organism name" value="rat"/>
</dbReference>
<dbReference type="AGR" id="RGD:70513"/>
<dbReference type="CTD" id="2798"/>
<dbReference type="RGD" id="70513">
    <property type="gene designation" value="Gnrhr"/>
</dbReference>
<dbReference type="eggNOG" id="KOG3656">
    <property type="taxonomic scope" value="Eukaryota"/>
</dbReference>
<dbReference type="InParanoid" id="P30969"/>
<dbReference type="OrthoDB" id="86141at9989"/>
<dbReference type="PhylomeDB" id="P30969"/>
<dbReference type="Reactome" id="R-RNO-375281">
    <property type="pathway name" value="Hormone ligand-binding receptors"/>
</dbReference>
<dbReference type="Reactome" id="R-RNO-416476">
    <property type="pathway name" value="G alpha (q) signalling events"/>
</dbReference>
<dbReference type="PRO" id="PR:P30969"/>
<dbReference type="Proteomes" id="UP000002494">
    <property type="component" value="Unplaced"/>
</dbReference>
<dbReference type="GO" id="GO:0005886">
    <property type="term" value="C:plasma membrane"/>
    <property type="evidence" value="ECO:0000318"/>
    <property type="project" value="GO_Central"/>
</dbReference>
<dbReference type="GO" id="GO:0004968">
    <property type="term" value="F:gonadotropin-releasing hormone receptor activity"/>
    <property type="evidence" value="ECO:0000266"/>
    <property type="project" value="RGD"/>
</dbReference>
<dbReference type="GO" id="GO:0016520">
    <property type="term" value="F:growth hormone-releasing hormone receptor activity"/>
    <property type="evidence" value="ECO:0000314"/>
    <property type="project" value="RGD"/>
</dbReference>
<dbReference type="GO" id="GO:0032870">
    <property type="term" value="P:cellular response to hormone stimulus"/>
    <property type="evidence" value="ECO:0000318"/>
    <property type="project" value="GO_Central"/>
</dbReference>
<dbReference type="GO" id="GO:0007623">
    <property type="term" value="P:circadian rhythm"/>
    <property type="evidence" value="ECO:0000270"/>
    <property type="project" value="UniProtKB"/>
</dbReference>
<dbReference type="GO" id="GO:0007186">
    <property type="term" value="P:G protein-coupled receptor signaling pathway"/>
    <property type="evidence" value="ECO:0000314"/>
    <property type="project" value="RGD"/>
</dbReference>
<dbReference type="GO" id="GO:0008285">
    <property type="term" value="P:negative regulation of cell population proliferation"/>
    <property type="evidence" value="ECO:0000314"/>
    <property type="project" value="RGD"/>
</dbReference>
<dbReference type="FunFam" id="1.20.1070.10:FF:000203">
    <property type="entry name" value="gonadotropin-releasing hormone receptor"/>
    <property type="match status" value="1"/>
</dbReference>
<dbReference type="Gene3D" id="1.20.1070.10">
    <property type="entry name" value="Rhodopsin 7-helix transmembrane proteins"/>
    <property type="match status" value="1"/>
</dbReference>
<dbReference type="InterPro" id="IPR000276">
    <property type="entry name" value="GPCR_Rhodpsn"/>
</dbReference>
<dbReference type="InterPro" id="IPR017452">
    <property type="entry name" value="GPCR_Rhodpsn_7TM"/>
</dbReference>
<dbReference type="InterPro" id="IPR001658">
    <property type="entry name" value="GphnRH_fam_rcpt"/>
</dbReference>
<dbReference type="PANTHER" id="PTHR24241:SF22">
    <property type="entry name" value="GONADOTROPIN-RELEASING HORMONE RECEPTOR"/>
    <property type="match status" value="1"/>
</dbReference>
<dbReference type="PANTHER" id="PTHR24241">
    <property type="entry name" value="NEUROPEPTIDE RECEPTOR-RELATED G-PROTEIN COUPLED RECEPTOR"/>
    <property type="match status" value="1"/>
</dbReference>
<dbReference type="Pfam" id="PF00001">
    <property type="entry name" value="7tm_1"/>
    <property type="match status" value="1"/>
</dbReference>
<dbReference type="PRINTS" id="PR00529">
    <property type="entry name" value="GNADOTRPHINR"/>
</dbReference>
<dbReference type="PRINTS" id="PR00237">
    <property type="entry name" value="GPCRRHODOPSN"/>
</dbReference>
<dbReference type="SUPFAM" id="SSF81321">
    <property type="entry name" value="Family A G protein-coupled receptor-like"/>
    <property type="match status" value="1"/>
</dbReference>
<dbReference type="PROSITE" id="PS00237">
    <property type="entry name" value="G_PROTEIN_RECEP_F1_1"/>
    <property type="match status" value="1"/>
</dbReference>
<dbReference type="PROSITE" id="PS50262">
    <property type="entry name" value="G_PROTEIN_RECEP_F1_2"/>
    <property type="match status" value="1"/>
</dbReference>
<organism>
    <name type="scientific">Rattus norvegicus</name>
    <name type="common">Rat</name>
    <dbReference type="NCBI Taxonomy" id="10116"/>
    <lineage>
        <taxon>Eukaryota</taxon>
        <taxon>Metazoa</taxon>
        <taxon>Chordata</taxon>
        <taxon>Craniata</taxon>
        <taxon>Vertebrata</taxon>
        <taxon>Euteleostomi</taxon>
        <taxon>Mammalia</taxon>
        <taxon>Eutheria</taxon>
        <taxon>Euarchontoglires</taxon>
        <taxon>Glires</taxon>
        <taxon>Rodentia</taxon>
        <taxon>Myomorpha</taxon>
        <taxon>Muroidea</taxon>
        <taxon>Muridae</taxon>
        <taxon>Murinae</taxon>
        <taxon>Rattus</taxon>
    </lineage>
</organism>
<reference key="1">
    <citation type="journal article" date="1992" name="Mol. Cell. Endocrinol.">
        <title>Molecular cloning and characterisation of the rat pituitary gonadotropin-releasing hormone (GnRH) receptor.</title>
        <authorList>
            <person name="Eidne K.A."/>
            <person name="Sellar R.E."/>
            <person name="Couper G."/>
            <person name="Anderson L."/>
            <person name="Taylor P.L."/>
        </authorList>
    </citation>
    <scope>NUCLEOTIDE SEQUENCE [MRNA]</scope>
    <source>
        <strain>Sprague-Dawley</strain>
        <tissue>Pituitary</tissue>
    </source>
</reference>
<reference key="2">
    <citation type="submission" date="1993-08" db="EMBL/GenBank/DDBJ databases">
        <title>Molecular cloning and regulation of gene expression of rat gonadotropin releasing hormone (GnRH) receptor.</title>
        <authorList>
            <person name="Kakar S.S."/>
            <person name="Grantham K."/>
            <person name="Musgrove L.C."/>
            <person name="Devor D.C."/>
            <person name="Sellers J.C."/>
            <person name="Neill J.D."/>
        </authorList>
    </citation>
    <scope>NUCLEOTIDE SEQUENCE [MRNA]</scope>
    <source>
        <strain>Buffalo</strain>
        <tissue>Pituitary</tissue>
    </source>
</reference>
<reference key="3">
    <citation type="journal article" date="1993" name="Biochem. Biophys. Res. Commun.">
        <title>Molecular and functional characterization of GnRH receptors cloned from rat pituitary and a mouse pituitary tumor cell line.</title>
        <authorList>
            <person name="Perrin M.H."/>
            <person name="Bilezikjian L.M."/>
            <person name="Hoeger C."/>
            <person name="Donaldson C.J."/>
            <person name="Rivier J."/>
            <person name="Haas Y."/>
            <person name="Vale W.W."/>
        </authorList>
    </citation>
    <scope>NUCLEOTIDE SEQUENCE [MRNA]</scope>
    <source>
        <tissue>Pituitary</tissue>
    </source>
</reference>
<reference key="4">
    <citation type="journal article" date="1992" name="Biochem. Biophys. Res. Commun.">
        <title>Isolation and characterization of cDNAs encoding the rat pituitary gonadotropin-releasing hormone receptor.</title>
        <authorList>
            <person name="Kaiser U.B."/>
            <person name="Zhao D."/>
            <person name="Cardona G.R."/>
            <person name="Chin W.W."/>
        </authorList>
    </citation>
    <scope>NUCLEOTIDE SEQUENCE [MRNA]</scope>
    <source>
        <strain>Sprague-Dawley</strain>
        <tissue>Pituitary</tissue>
    </source>
</reference>
<reference key="5">
    <citation type="journal article" date="1994" name="Biochem. Biophys. Res. Commun.">
        <title>Nucleotide sequence analysis of mRNAs predicts that rat pituitary and gonadal gonadotropin-releasing hormone receptor proteins have identical primary structure.</title>
        <authorList>
            <person name="Moumni M."/>
            <person name="Kottler M.L."/>
            <person name="Counis R."/>
        </authorList>
    </citation>
    <scope>NUCLEOTIDE SEQUENCE [MRNA]</scope>
    <source>
        <tissue>Ovary</tissue>
        <tissue>Testis</tissue>
    </source>
</reference>
<reference key="6">
    <citation type="journal article" date="1993" name="Zool. Sci.">
        <title>Isolation of rat GnRH receptor cDNA having different 5'-noncoding sequence.</title>
        <authorList>
            <person name="Kudo A."/>
            <person name="Park M.K."/>
            <person name="Kawashima S."/>
        </authorList>
    </citation>
    <scope>NUCLEOTIDE SEQUENCE [MRNA]</scope>
</reference>
<reference key="7">
    <citation type="submission" date="1997-05" db="EMBL/GenBank/DDBJ databases">
        <authorList>
            <person name="Reinhart J."/>
            <person name="Xiao S."/>
            <person name="Arora K.K."/>
            <person name="Catt K.J."/>
        </authorList>
    </citation>
    <scope>NUCLEOTIDE SEQUENCE [GENOMIC DNA]</scope>
</reference>
<reference key="8">
    <citation type="journal article" date="2012" name="J. Neuroendocrinol.">
        <title>Thyroid transcription factor 1, a homeodomain containing transcription factor, contributes to regulating periodic oscillations in GnRH gene expression.</title>
        <authorList>
            <person name="Matagne V."/>
            <person name="Kim J.G."/>
            <person name="Ryu B.J."/>
            <person name="Hur M.K."/>
            <person name="Kim M.S."/>
            <person name="Kim K."/>
            <person name="Park B.S."/>
            <person name="Damante G."/>
            <person name="Smiley G."/>
            <person name="Lee B.J."/>
            <person name="Ojeda S.R."/>
        </authorList>
    </citation>
    <scope>INDUCTION</scope>
</reference>
<evidence type="ECO:0000255" key="1"/>
<evidence type="ECO:0000255" key="2">
    <source>
        <dbReference type="PROSITE-ProRule" id="PRU00521"/>
    </source>
</evidence>
<evidence type="ECO:0000269" key="3">
    <source>
    </source>
</evidence>
<evidence type="ECO:0000305" key="4"/>